<organism>
    <name type="scientific">Pseudomonas fluorescens (strain Pf0-1)</name>
    <dbReference type="NCBI Taxonomy" id="205922"/>
    <lineage>
        <taxon>Bacteria</taxon>
        <taxon>Pseudomonadati</taxon>
        <taxon>Pseudomonadota</taxon>
        <taxon>Gammaproteobacteria</taxon>
        <taxon>Pseudomonadales</taxon>
        <taxon>Pseudomonadaceae</taxon>
        <taxon>Pseudomonas</taxon>
    </lineage>
</organism>
<dbReference type="EMBL" id="CP000094">
    <property type="protein sequence ID" value="ABA72190.1"/>
    <property type="molecule type" value="Genomic_DNA"/>
</dbReference>
<dbReference type="RefSeq" id="WP_011332112.1">
    <property type="nucleotide sequence ID" value="NC_007492.2"/>
</dbReference>
<dbReference type="SMR" id="Q3KJ66"/>
<dbReference type="KEGG" id="pfo:Pfl01_0446"/>
<dbReference type="eggNOG" id="COG3263">
    <property type="taxonomic scope" value="Bacteria"/>
</dbReference>
<dbReference type="HOGENOM" id="CLU_005912_9_2_6"/>
<dbReference type="Proteomes" id="UP000002704">
    <property type="component" value="Chromosome"/>
</dbReference>
<dbReference type="GO" id="GO:0005886">
    <property type="term" value="C:plasma membrane"/>
    <property type="evidence" value="ECO:0007669"/>
    <property type="project" value="UniProtKB-SubCell"/>
</dbReference>
<dbReference type="GO" id="GO:0050660">
    <property type="term" value="F:flavin adenine dinucleotide binding"/>
    <property type="evidence" value="ECO:0007669"/>
    <property type="project" value="InterPro"/>
</dbReference>
<dbReference type="GO" id="GO:0015386">
    <property type="term" value="F:potassium:proton antiporter activity"/>
    <property type="evidence" value="ECO:0007669"/>
    <property type="project" value="UniProtKB-UniRule"/>
</dbReference>
<dbReference type="GO" id="GO:0006884">
    <property type="term" value="P:cell volume homeostasis"/>
    <property type="evidence" value="ECO:0007669"/>
    <property type="project" value="InterPro"/>
</dbReference>
<dbReference type="Gene3D" id="1.20.1530.20">
    <property type="match status" value="1"/>
</dbReference>
<dbReference type="Gene3D" id="3.30.465.10">
    <property type="match status" value="1"/>
</dbReference>
<dbReference type="Gene3D" id="3.30.70.1450">
    <property type="entry name" value="Regulator of K+ conductance, C-terminal domain"/>
    <property type="match status" value="1"/>
</dbReference>
<dbReference type="HAMAP" id="MF_01075">
    <property type="entry name" value="NhaP2"/>
    <property type="match status" value="1"/>
</dbReference>
<dbReference type="InterPro" id="IPR006153">
    <property type="entry name" value="Cation/H_exchanger_TM"/>
</dbReference>
<dbReference type="InterPro" id="IPR036318">
    <property type="entry name" value="FAD-bd_PCMH-like_sf"/>
</dbReference>
<dbReference type="InterPro" id="IPR016169">
    <property type="entry name" value="FAD-bd_PCMH_sub2"/>
</dbReference>
<dbReference type="InterPro" id="IPR038770">
    <property type="entry name" value="Na+/solute_symporter_sf"/>
</dbReference>
<dbReference type="InterPro" id="IPR023729">
    <property type="entry name" value="NhaP2"/>
</dbReference>
<dbReference type="InterPro" id="IPR006037">
    <property type="entry name" value="RCK_C"/>
</dbReference>
<dbReference type="InterPro" id="IPR036721">
    <property type="entry name" value="RCK_C_sf"/>
</dbReference>
<dbReference type="InterPro" id="IPR005170">
    <property type="entry name" value="Transptr-assoc_dom"/>
</dbReference>
<dbReference type="NCBIfam" id="NF003714">
    <property type="entry name" value="PRK05326.1-1"/>
    <property type="match status" value="1"/>
</dbReference>
<dbReference type="NCBIfam" id="NF003715">
    <property type="entry name" value="PRK05326.1-2"/>
    <property type="match status" value="1"/>
</dbReference>
<dbReference type="NCBIfam" id="NF003716">
    <property type="entry name" value="PRK05326.1-3"/>
    <property type="match status" value="1"/>
</dbReference>
<dbReference type="PANTHER" id="PTHR32507:SF7">
    <property type="entry name" value="K(+)_H(+) ANTIPORTER NHAP2"/>
    <property type="match status" value="1"/>
</dbReference>
<dbReference type="PANTHER" id="PTHR32507">
    <property type="entry name" value="NA(+)/H(+) ANTIPORTER 1"/>
    <property type="match status" value="1"/>
</dbReference>
<dbReference type="Pfam" id="PF03471">
    <property type="entry name" value="CorC_HlyC"/>
    <property type="match status" value="1"/>
</dbReference>
<dbReference type="Pfam" id="PF00999">
    <property type="entry name" value="Na_H_Exchanger"/>
    <property type="match status" value="1"/>
</dbReference>
<dbReference type="Pfam" id="PF02080">
    <property type="entry name" value="TrkA_C"/>
    <property type="match status" value="1"/>
</dbReference>
<dbReference type="SMART" id="SM01091">
    <property type="entry name" value="CorC_HlyC"/>
    <property type="match status" value="1"/>
</dbReference>
<dbReference type="SUPFAM" id="SSF56176">
    <property type="entry name" value="FAD-binding/transporter-associated domain-like"/>
    <property type="match status" value="1"/>
</dbReference>
<dbReference type="SUPFAM" id="SSF116726">
    <property type="entry name" value="TrkA C-terminal domain-like"/>
    <property type="match status" value="1"/>
</dbReference>
<dbReference type="PROSITE" id="PS51202">
    <property type="entry name" value="RCK_C"/>
    <property type="match status" value="1"/>
</dbReference>
<evidence type="ECO:0000255" key="1">
    <source>
        <dbReference type="HAMAP-Rule" id="MF_01075"/>
    </source>
</evidence>
<sequence length="580" mass="61383">MNATTINSLFLIGALLVGASILVSSLSSRLGIPILVIILAVGMSAGVDGGGIIFDNYPTAYLVGNLALAVILLDGGLRTRVSSFRVALWPALSLATVGVLITTGLTGMAAAWLFDLNLIQGLLIGAIVGSTDAAAVFSLLGGKGLNERVTASLEIESGSNDPMAVFLTVTLIDMLASGQTGLHWSLLTHLIREFGIGGVIGLGGGWLMLQLVNRINLATGLYPILVIAGGLVVFALTNALHGSGFLAVYLCGLVIGNRPVRSRHGILHMLDGMAWLAQIGMFLVLGLLVTPHDLLPIALPALGLALWMILFARPLSVLVGLLPFKAFHGREKAFISWVGLRGAVPIILAVFPLMAGLPNAQLYFNLAFFIVLVSLLVQGTSLPWVAKLLKVTVPPEPAPISRAALEVHVTSEWELFVYKLGAEKWCIGSPLRELKMPEGTRIAALFRGQQLLHPSGSTVLEVDDLLCVIGHEHNLPALGKLFSQAPQRGLDLRFFGDFVLEGDAQLKAVAALYGLPAEGIDPDMTLGHFIAQKVGGAPIVGDQVEWNNTHWTVAVMDGNKIGKVGVRFPEGSRPGPGLFL</sequence>
<feature type="chain" id="PRO_0000278158" description="K(+)/H(+) antiporter NhaP2">
    <location>
        <begin position="1"/>
        <end position="580"/>
    </location>
</feature>
<feature type="transmembrane region" description="Helical" evidence="1">
    <location>
        <begin position="6"/>
        <end position="26"/>
    </location>
</feature>
<feature type="transmembrane region" description="Helical" evidence="1">
    <location>
        <begin position="34"/>
        <end position="54"/>
    </location>
</feature>
<feature type="transmembrane region" description="Helical" evidence="1">
    <location>
        <begin position="57"/>
        <end position="77"/>
    </location>
</feature>
<feature type="transmembrane region" description="Helical" evidence="1">
    <location>
        <begin position="94"/>
        <end position="114"/>
    </location>
</feature>
<feature type="transmembrane region" description="Helical" evidence="1">
    <location>
        <begin position="121"/>
        <end position="141"/>
    </location>
</feature>
<feature type="transmembrane region" description="Helical" evidence="1">
    <location>
        <begin position="162"/>
        <end position="182"/>
    </location>
</feature>
<feature type="transmembrane region" description="Helical" evidence="1">
    <location>
        <begin position="193"/>
        <end position="213"/>
    </location>
</feature>
<feature type="transmembrane region" description="Helical" evidence="1">
    <location>
        <begin position="217"/>
        <end position="237"/>
    </location>
</feature>
<feature type="transmembrane region" description="Helical" evidence="1">
    <location>
        <begin position="240"/>
        <end position="260"/>
    </location>
</feature>
<feature type="transmembrane region" description="Helical" evidence="1">
    <location>
        <begin position="269"/>
        <end position="289"/>
    </location>
</feature>
<feature type="transmembrane region" description="Helical" evidence="1">
    <location>
        <begin position="292"/>
        <end position="312"/>
    </location>
</feature>
<feature type="transmembrane region" description="Helical" evidence="1">
    <location>
        <begin position="334"/>
        <end position="354"/>
    </location>
</feature>
<feature type="transmembrane region" description="Helical" evidence="1">
    <location>
        <begin position="366"/>
        <end position="386"/>
    </location>
</feature>
<feature type="domain" description="RCK C-terminal" evidence="1">
    <location>
        <begin position="402"/>
        <end position="484"/>
    </location>
</feature>
<comment type="function">
    <text evidence="1">K(+)/H(+) antiporter that extrudes potassium in exchange for external protons and maintains the internal concentration of potassium under toxic levels.</text>
</comment>
<comment type="catalytic activity">
    <reaction evidence="1">
        <text>K(+)(in) + H(+)(out) = K(+)(out) + H(+)(in)</text>
        <dbReference type="Rhea" id="RHEA:29467"/>
        <dbReference type="ChEBI" id="CHEBI:15378"/>
        <dbReference type="ChEBI" id="CHEBI:29103"/>
    </reaction>
    <physiologicalReaction direction="left-to-right" evidence="1">
        <dbReference type="Rhea" id="RHEA:29468"/>
    </physiologicalReaction>
</comment>
<comment type="subcellular location">
    <subcellularLocation>
        <location evidence="1">Cell inner membrane</location>
        <topology evidence="1">Multi-pass membrane protein</topology>
    </subcellularLocation>
</comment>
<comment type="similarity">
    <text evidence="1">Belongs to the monovalent cation:proton antiporter 1 (CPA1) transporter (TC 2.A.36) family. NhaP2 subfamily.</text>
</comment>
<accession>Q3KJ66</accession>
<name>NHAP2_PSEPF</name>
<proteinExistence type="inferred from homology"/>
<gene>
    <name evidence="1" type="primary">nhaP2</name>
    <name type="synonym">cvrA</name>
    <name type="ordered locus">Pfl01_0446</name>
</gene>
<keyword id="KW-0050">Antiport</keyword>
<keyword id="KW-0997">Cell inner membrane</keyword>
<keyword id="KW-1003">Cell membrane</keyword>
<keyword id="KW-0406">Ion transport</keyword>
<keyword id="KW-0472">Membrane</keyword>
<keyword id="KW-0630">Potassium</keyword>
<keyword id="KW-0633">Potassium transport</keyword>
<keyword id="KW-0812">Transmembrane</keyword>
<keyword id="KW-1133">Transmembrane helix</keyword>
<keyword id="KW-0813">Transport</keyword>
<reference key="1">
    <citation type="journal article" date="2009" name="Genome Biol.">
        <title>Genomic and genetic analyses of diversity and plant interactions of Pseudomonas fluorescens.</title>
        <authorList>
            <person name="Silby M.W."/>
            <person name="Cerdeno-Tarraga A.M."/>
            <person name="Vernikos G.S."/>
            <person name="Giddens S.R."/>
            <person name="Jackson R.W."/>
            <person name="Preston G.M."/>
            <person name="Zhang X.-X."/>
            <person name="Moon C.D."/>
            <person name="Gehrig S.M."/>
            <person name="Godfrey S.A.C."/>
            <person name="Knight C.G."/>
            <person name="Malone J.G."/>
            <person name="Robinson Z."/>
            <person name="Spiers A.J."/>
            <person name="Harris S."/>
            <person name="Challis G.L."/>
            <person name="Yaxley A.M."/>
            <person name="Harris D."/>
            <person name="Seeger K."/>
            <person name="Murphy L."/>
            <person name="Rutter S."/>
            <person name="Squares R."/>
            <person name="Quail M.A."/>
            <person name="Saunders E."/>
            <person name="Mavromatis K."/>
            <person name="Brettin T.S."/>
            <person name="Bentley S.D."/>
            <person name="Hothersall J."/>
            <person name="Stephens E."/>
            <person name="Thomas C.M."/>
            <person name="Parkhill J."/>
            <person name="Levy S.B."/>
            <person name="Rainey P.B."/>
            <person name="Thomson N.R."/>
        </authorList>
    </citation>
    <scope>NUCLEOTIDE SEQUENCE [LARGE SCALE GENOMIC DNA]</scope>
    <source>
        <strain>Pf0-1</strain>
    </source>
</reference>
<protein>
    <recommendedName>
        <fullName evidence="1">K(+)/H(+) antiporter NhaP2</fullName>
    </recommendedName>
    <alternativeName>
        <fullName evidence="1">Potassium/proton antiporter NhaP2</fullName>
    </alternativeName>
</protein>